<accession>Q7VQL0</accession>
<evidence type="ECO:0000255" key="1">
    <source>
        <dbReference type="HAMAP-Rule" id="MF_02002"/>
    </source>
</evidence>
<protein>
    <recommendedName>
        <fullName evidence="1">Isoleucine--tRNA ligase</fullName>
        <ecNumber evidence="1">6.1.1.5</ecNumber>
    </recommendedName>
    <alternativeName>
        <fullName evidence="1">Isoleucyl-tRNA synthetase</fullName>
        <shortName evidence="1">IleRS</shortName>
    </alternativeName>
</protein>
<name>SYI_BLOFL</name>
<proteinExistence type="inferred from homology"/>
<keyword id="KW-0030">Aminoacyl-tRNA synthetase</keyword>
<keyword id="KW-0067">ATP-binding</keyword>
<keyword id="KW-0963">Cytoplasm</keyword>
<keyword id="KW-0436">Ligase</keyword>
<keyword id="KW-0479">Metal-binding</keyword>
<keyword id="KW-0547">Nucleotide-binding</keyword>
<keyword id="KW-0648">Protein biosynthesis</keyword>
<keyword id="KW-1185">Reference proteome</keyword>
<keyword id="KW-0862">Zinc</keyword>
<feature type="chain" id="PRO_0000098355" description="Isoleucine--tRNA ligase">
    <location>
        <begin position="1"/>
        <end position="953"/>
    </location>
</feature>
<feature type="short sequence motif" description="'HIGH' region">
    <location>
        <begin position="58"/>
        <end position="68"/>
    </location>
</feature>
<feature type="short sequence motif" description="'KMSKS' region">
    <location>
        <begin position="614"/>
        <end position="618"/>
    </location>
</feature>
<feature type="binding site" evidence="1">
    <location>
        <position position="573"/>
    </location>
    <ligand>
        <name>L-isoleucyl-5'-AMP</name>
        <dbReference type="ChEBI" id="CHEBI:178002"/>
    </ligand>
</feature>
<feature type="binding site" evidence="1">
    <location>
        <position position="617"/>
    </location>
    <ligand>
        <name>ATP</name>
        <dbReference type="ChEBI" id="CHEBI:30616"/>
    </ligand>
</feature>
<feature type="binding site" evidence="1">
    <location>
        <position position="916"/>
    </location>
    <ligand>
        <name>Zn(2+)</name>
        <dbReference type="ChEBI" id="CHEBI:29105"/>
    </ligand>
</feature>
<feature type="binding site" evidence="1">
    <location>
        <position position="919"/>
    </location>
    <ligand>
        <name>Zn(2+)</name>
        <dbReference type="ChEBI" id="CHEBI:29105"/>
    </ligand>
</feature>
<feature type="binding site" evidence="1">
    <location>
        <position position="936"/>
    </location>
    <ligand>
        <name>Zn(2+)</name>
        <dbReference type="ChEBI" id="CHEBI:29105"/>
    </ligand>
</feature>
<feature type="binding site" evidence="1">
    <location>
        <position position="939"/>
    </location>
    <ligand>
        <name>Zn(2+)</name>
        <dbReference type="ChEBI" id="CHEBI:29105"/>
    </ligand>
</feature>
<sequence>MADYKSTLNLPYTQFPMRGNLPIIEIKILERWNRDNLYEIIRRKKNEKKLFLLHDGPPYANGFIHLGHAVNKILKDIIIKFKGLSGYDAPYIPGWDCHGLPIELQVEKLIKKVNMDIDINSQEFRNYCREYVKKQIEIQKKDFIRLGILGEWKNPYLTMDYKTEANIIRTLGKIISNGYFYKGIKPVYWCFQCHSALANSEVEYNDYHYSNAVDVGFSIVENVSINKIFNINCYIENIELVIWTTTIWTLPANQAISIHPDYIYQLVKILDNEKYLIIAANLVNMFMNRIKCTMWQVLGEVLGSKLDRLTARHPFMNFNVPLVLSKHIKLDSGTGLVHIAPDHGPDDYLISKKYKFKNRDSLIDSNGYYLSNSHNRLCGLHIFNANEIIIDLLYKSKNFLYFNANYQHSYPYCWRHKIPLIFRTTSQWFVNMDHNNLRDKLLRTLQQVRWIPDSGYSSMQSMIVNRPDWCLSRQRVWGIPIPVFVHKKTEVLHPNTCIFIEQVAQLVEKYGIQIWWDLKNEDIILNKAESMNYQKIYDTLDVWFDSGSTHDSVILDRFNSKLKSKLQIDLYLEGVDQYRGWFMSSLIIAVAIKGYAPYKQVLSHGFTIDDKGNKMSKSLGNIIRPLDIVNKFGSDILRLWVASSDYSKDMVISDDVLKNVTDIYRRIRNTIRFFLANINDFDPEKDLVQSNRMVALDQWAINHTLSVQVKIISNYEQYKFHNVIRYIMKFCSIEMGSFYLDVVKDRLYTLNKDSLARRSCQTALYHIIESMVRWIAPILSFTADEIWKYIPGNRSKYVFTEEWYDRLFKIDENQIVNSNYWNFFLNIRNKVNKVIEQERVNGIIKGSLEADVILYVTPILKKKLRILKNELAFGLIVSSVMVLSIDDVDFNTIKENHEENSDELKVVLKKSHGIKCLRCWNYTLSMSKNENYLNICSRCVHNITGLGEDRRFF</sequence>
<dbReference type="EC" id="6.1.1.5" evidence="1"/>
<dbReference type="EMBL" id="BX248583">
    <property type="protein sequence ID" value="CAD83639.1"/>
    <property type="molecule type" value="Genomic_DNA"/>
</dbReference>
<dbReference type="SMR" id="Q7VQL0"/>
<dbReference type="STRING" id="203907.Bfl118"/>
<dbReference type="KEGG" id="bfl:Bfl118"/>
<dbReference type="eggNOG" id="COG0060">
    <property type="taxonomic scope" value="Bacteria"/>
</dbReference>
<dbReference type="HOGENOM" id="CLU_001493_7_0_6"/>
<dbReference type="OrthoDB" id="9810365at2"/>
<dbReference type="Proteomes" id="UP000002192">
    <property type="component" value="Chromosome"/>
</dbReference>
<dbReference type="GO" id="GO:0005829">
    <property type="term" value="C:cytosol"/>
    <property type="evidence" value="ECO:0007669"/>
    <property type="project" value="TreeGrafter"/>
</dbReference>
<dbReference type="GO" id="GO:0002161">
    <property type="term" value="F:aminoacyl-tRNA deacylase activity"/>
    <property type="evidence" value="ECO:0007669"/>
    <property type="project" value="InterPro"/>
</dbReference>
<dbReference type="GO" id="GO:0005524">
    <property type="term" value="F:ATP binding"/>
    <property type="evidence" value="ECO:0007669"/>
    <property type="project" value="UniProtKB-UniRule"/>
</dbReference>
<dbReference type="GO" id="GO:0004822">
    <property type="term" value="F:isoleucine-tRNA ligase activity"/>
    <property type="evidence" value="ECO:0007669"/>
    <property type="project" value="UniProtKB-UniRule"/>
</dbReference>
<dbReference type="GO" id="GO:0000049">
    <property type="term" value="F:tRNA binding"/>
    <property type="evidence" value="ECO:0007669"/>
    <property type="project" value="InterPro"/>
</dbReference>
<dbReference type="GO" id="GO:0008270">
    <property type="term" value="F:zinc ion binding"/>
    <property type="evidence" value="ECO:0007669"/>
    <property type="project" value="UniProtKB-UniRule"/>
</dbReference>
<dbReference type="GO" id="GO:0006428">
    <property type="term" value="P:isoleucyl-tRNA aminoacylation"/>
    <property type="evidence" value="ECO:0007669"/>
    <property type="project" value="UniProtKB-UniRule"/>
</dbReference>
<dbReference type="CDD" id="cd07960">
    <property type="entry name" value="Anticodon_Ia_Ile_BEm"/>
    <property type="match status" value="1"/>
</dbReference>
<dbReference type="CDD" id="cd00818">
    <property type="entry name" value="IleRS_core"/>
    <property type="match status" value="1"/>
</dbReference>
<dbReference type="FunFam" id="1.10.730.20:FF:000001">
    <property type="entry name" value="Isoleucine--tRNA ligase"/>
    <property type="match status" value="1"/>
</dbReference>
<dbReference type="FunFam" id="3.40.50.620:FF:000042">
    <property type="entry name" value="Isoleucine--tRNA ligase"/>
    <property type="match status" value="1"/>
</dbReference>
<dbReference type="FunFam" id="3.40.50.620:FF:000048">
    <property type="entry name" value="Isoleucine--tRNA ligase"/>
    <property type="match status" value="1"/>
</dbReference>
<dbReference type="Gene3D" id="1.10.730.20">
    <property type="match status" value="1"/>
</dbReference>
<dbReference type="Gene3D" id="3.40.50.620">
    <property type="entry name" value="HUPs"/>
    <property type="match status" value="2"/>
</dbReference>
<dbReference type="Gene3D" id="3.90.740.10">
    <property type="entry name" value="Valyl/Leucyl/Isoleucyl-tRNA synthetase, editing domain"/>
    <property type="match status" value="1"/>
</dbReference>
<dbReference type="HAMAP" id="MF_02002">
    <property type="entry name" value="Ile_tRNA_synth_type1"/>
    <property type="match status" value="1"/>
</dbReference>
<dbReference type="InterPro" id="IPR001412">
    <property type="entry name" value="aa-tRNA-synth_I_CS"/>
</dbReference>
<dbReference type="InterPro" id="IPR002300">
    <property type="entry name" value="aa-tRNA-synth_Ia"/>
</dbReference>
<dbReference type="InterPro" id="IPR033708">
    <property type="entry name" value="Anticodon_Ile_BEm"/>
</dbReference>
<dbReference type="InterPro" id="IPR002301">
    <property type="entry name" value="Ile-tRNA-ligase"/>
</dbReference>
<dbReference type="InterPro" id="IPR023585">
    <property type="entry name" value="Ile-tRNA-ligase_type1"/>
</dbReference>
<dbReference type="InterPro" id="IPR050081">
    <property type="entry name" value="Ile-tRNA_ligase"/>
</dbReference>
<dbReference type="InterPro" id="IPR013155">
    <property type="entry name" value="M/V/L/I-tRNA-synth_anticd-bd"/>
</dbReference>
<dbReference type="InterPro" id="IPR014729">
    <property type="entry name" value="Rossmann-like_a/b/a_fold"/>
</dbReference>
<dbReference type="InterPro" id="IPR009080">
    <property type="entry name" value="tRNAsynth_Ia_anticodon-bd"/>
</dbReference>
<dbReference type="InterPro" id="IPR009008">
    <property type="entry name" value="Val/Leu/Ile-tRNA-synth_edit"/>
</dbReference>
<dbReference type="InterPro" id="IPR010663">
    <property type="entry name" value="Znf_FPG/IleRS"/>
</dbReference>
<dbReference type="NCBIfam" id="TIGR00392">
    <property type="entry name" value="ileS"/>
    <property type="match status" value="1"/>
</dbReference>
<dbReference type="PANTHER" id="PTHR42765:SF1">
    <property type="entry name" value="ISOLEUCINE--TRNA LIGASE, MITOCHONDRIAL"/>
    <property type="match status" value="1"/>
</dbReference>
<dbReference type="PANTHER" id="PTHR42765">
    <property type="entry name" value="SOLEUCYL-TRNA SYNTHETASE"/>
    <property type="match status" value="1"/>
</dbReference>
<dbReference type="Pfam" id="PF08264">
    <property type="entry name" value="Anticodon_1"/>
    <property type="match status" value="1"/>
</dbReference>
<dbReference type="Pfam" id="PF00133">
    <property type="entry name" value="tRNA-synt_1"/>
    <property type="match status" value="1"/>
</dbReference>
<dbReference type="Pfam" id="PF06827">
    <property type="entry name" value="zf-FPG_IleRS"/>
    <property type="match status" value="1"/>
</dbReference>
<dbReference type="PRINTS" id="PR00984">
    <property type="entry name" value="TRNASYNTHILE"/>
</dbReference>
<dbReference type="SUPFAM" id="SSF47323">
    <property type="entry name" value="Anticodon-binding domain of a subclass of class I aminoacyl-tRNA synthetases"/>
    <property type="match status" value="1"/>
</dbReference>
<dbReference type="SUPFAM" id="SSF52374">
    <property type="entry name" value="Nucleotidylyl transferase"/>
    <property type="match status" value="1"/>
</dbReference>
<dbReference type="SUPFAM" id="SSF50677">
    <property type="entry name" value="ValRS/IleRS/LeuRS editing domain"/>
    <property type="match status" value="1"/>
</dbReference>
<dbReference type="PROSITE" id="PS00178">
    <property type="entry name" value="AA_TRNA_LIGASE_I"/>
    <property type="match status" value="1"/>
</dbReference>
<gene>
    <name evidence="1" type="primary">ileS</name>
    <name type="ordered locus">Bfl118</name>
</gene>
<reference key="1">
    <citation type="journal article" date="2003" name="Proc. Natl. Acad. Sci. U.S.A.">
        <title>The genome sequence of Blochmannia floridanus: comparative analysis of reduced genomes.</title>
        <authorList>
            <person name="Gil R."/>
            <person name="Silva F.J."/>
            <person name="Zientz E."/>
            <person name="Delmotte F."/>
            <person name="Gonzalez-Candelas F."/>
            <person name="Latorre A."/>
            <person name="Rausell C."/>
            <person name="Kamerbeek J."/>
            <person name="Gadau J."/>
            <person name="Hoelldobler B."/>
            <person name="van Ham R.C.H.J."/>
            <person name="Gross R."/>
            <person name="Moya A."/>
        </authorList>
    </citation>
    <scope>NUCLEOTIDE SEQUENCE [LARGE SCALE GENOMIC DNA]</scope>
</reference>
<organism>
    <name type="scientific">Blochmanniella floridana</name>
    <dbReference type="NCBI Taxonomy" id="203907"/>
    <lineage>
        <taxon>Bacteria</taxon>
        <taxon>Pseudomonadati</taxon>
        <taxon>Pseudomonadota</taxon>
        <taxon>Gammaproteobacteria</taxon>
        <taxon>Enterobacterales</taxon>
        <taxon>Enterobacteriaceae</taxon>
        <taxon>ant endosymbionts</taxon>
        <taxon>Candidatus Blochmanniella</taxon>
    </lineage>
</organism>
<comment type="function">
    <text evidence="1">Catalyzes the attachment of isoleucine to tRNA(Ile). As IleRS can inadvertently accommodate and process structurally similar amino acids such as valine, to avoid such errors it has two additional distinct tRNA(Ile)-dependent editing activities. One activity is designated as 'pretransfer' editing and involves the hydrolysis of activated Val-AMP. The other activity is designated 'posttransfer' editing and involves deacylation of mischarged Val-tRNA(Ile).</text>
</comment>
<comment type="catalytic activity">
    <reaction evidence="1">
        <text>tRNA(Ile) + L-isoleucine + ATP = L-isoleucyl-tRNA(Ile) + AMP + diphosphate</text>
        <dbReference type="Rhea" id="RHEA:11060"/>
        <dbReference type="Rhea" id="RHEA-COMP:9666"/>
        <dbReference type="Rhea" id="RHEA-COMP:9695"/>
        <dbReference type="ChEBI" id="CHEBI:30616"/>
        <dbReference type="ChEBI" id="CHEBI:33019"/>
        <dbReference type="ChEBI" id="CHEBI:58045"/>
        <dbReference type="ChEBI" id="CHEBI:78442"/>
        <dbReference type="ChEBI" id="CHEBI:78528"/>
        <dbReference type="ChEBI" id="CHEBI:456215"/>
        <dbReference type="EC" id="6.1.1.5"/>
    </reaction>
</comment>
<comment type="cofactor">
    <cofactor evidence="1">
        <name>Zn(2+)</name>
        <dbReference type="ChEBI" id="CHEBI:29105"/>
    </cofactor>
    <text evidence="1">Binds 1 zinc ion per subunit.</text>
</comment>
<comment type="subunit">
    <text evidence="1">Monomer.</text>
</comment>
<comment type="subcellular location">
    <subcellularLocation>
        <location evidence="1">Cytoplasm</location>
    </subcellularLocation>
</comment>
<comment type="domain">
    <text evidence="1">IleRS has two distinct active sites: one for aminoacylation and one for editing. The misactivated valine is translocated from the active site to the editing site, which sterically excludes the correctly activated isoleucine. The single editing site contains two valyl binding pockets, one specific for each substrate (Val-AMP or Val-tRNA(Ile)).</text>
</comment>
<comment type="similarity">
    <text evidence="1">Belongs to the class-I aminoacyl-tRNA synthetase family. IleS type 1 subfamily.</text>
</comment>